<name>RS4_BIFLD</name>
<keyword id="KW-0687">Ribonucleoprotein</keyword>
<keyword id="KW-0689">Ribosomal protein</keyword>
<keyword id="KW-0694">RNA-binding</keyword>
<keyword id="KW-0699">rRNA-binding</keyword>
<proteinExistence type="inferred from homology"/>
<accession>B3DSF0</accession>
<gene>
    <name evidence="1" type="primary">rpsD</name>
    <name type="ordered locus">BLD_0623</name>
</gene>
<dbReference type="EMBL" id="CP000605">
    <property type="protein sequence ID" value="ACD98069.1"/>
    <property type="molecule type" value="Genomic_DNA"/>
</dbReference>
<dbReference type="RefSeq" id="WP_007052130.1">
    <property type="nucleotide sequence ID" value="NZ_AABM02000001.1"/>
</dbReference>
<dbReference type="SMR" id="B3DSF0"/>
<dbReference type="GeneID" id="69577973"/>
<dbReference type="KEGG" id="blj:BLD_0623"/>
<dbReference type="HOGENOM" id="CLU_092403_0_3_11"/>
<dbReference type="Proteomes" id="UP000002419">
    <property type="component" value="Chromosome"/>
</dbReference>
<dbReference type="GO" id="GO:0015935">
    <property type="term" value="C:small ribosomal subunit"/>
    <property type="evidence" value="ECO:0007669"/>
    <property type="project" value="InterPro"/>
</dbReference>
<dbReference type="GO" id="GO:0019843">
    <property type="term" value="F:rRNA binding"/>
    <property type="evidence" value="ECO:0007669"/>
    <property type="project" value="UniProtKB-UniRule"/>
</dbReference>
<dbReference type="GO" id="GO:0003735">
    <property type="term" value="F:structural constituent of ribosome"/>
    <property type="evidence" value="ECO:0007669"/>
    <property type="project" value="InterPro"/>
</dbReference>
<dbReference type="GO" id="GO:0042274">
    <property type="term" value="P:ribosomal small subunit biogenesis"/>
    <property type="evidence" value="ECO:0007669"/>
    <property type="project" value="TreeGrafter"/>
</dbReference>
<dbReference type="GO" id="GO:0006412">
    <property type="term" value="P:translation"/>
    <property type="evidence" value="ECO:0007669"/>
    <property type="project" value="UniProtKB-UniRule"/>
</dbReference>
<dbReference type="CDD" id="cd00165">
    <property type="entry name" value="S4"/>
    <property type="match status" value="1"/>
</dbReference>
<dbReference type="FunFam" id="3.10.290.10:FF:000001">
    <property type="entry name" value="30S ribosomal protein S4"/>
    <property type="match status" value="1"/>
</dbReference>
<dbReference type="Gene3D" id="1.10.1050.10">
    <property type="entry name" value="Ribosomal Protein S4 Delta 41, Chain A, domain 1"/>
    <property type="match status" value="1"/>
</dbReference>
<dbReference type="Gene3D" id="3.10.290.10">
    <property type="entry name" value="RNA-binding S4 domain"/>
    <property type="match status" value="1"/>
</dbReference>
<dbReference type="HAMAP" id="MF_01306_B">
    <property type="entry name" value="Ribosomal_uS4_B"/>
    <property type="match status" value="1"/>
</dbReference>
<dbReference type="InterPro" id="IPR022801">
    <property type="entry name" value="Ribosomal_uS4"/>
</dbReference>
<dbReference type="InterPro" id="IPR005709">
    <property type="entry name" value="Ribosomal_uS4_bac-type"/>
</dbReference>
<dbReference type="InterPro" id="IPR018079">
    <property type="entry name" value="Ribosomal_uS4_CS"/>
</dbReference>
<dbReference type="InterPro" id="IPR001912">
    <property type="entry name" value="Ribosomal_uS4_N"/>
</dbReference>
<dbReference type="InterPro" id="IPR002942">
    <property type="entry name" value="S4_RNA-bd"/>
</dbReference>
<dbReference type="InterPro" id="IPR036986">
    <property type="entry name" value="S4_RNA-bd_sf"/>
</dbReference>
<dbReference type="NCBIfam" id="NF003717">
    <property type="entry name" value="PRK05327.1"/>
    <property type="match status" value="1"/>
</dbReference>
<dbReference type="NCBIfam" id="TIGR01017">
    <property type="entry name" value="rpsD_bact"/>
    <property type="match status" value="1"/>
</dbReference>
<dbReference type="PANTHER" id="PTHR11831">
    <property type="entry name" value="30S 40S RIBOSOMAL PROTEIN"/>
    <property type="match status" value="1"/>
</dbReference>
<dbReference type="PANTHER" id="PTHR11831:SF4">
    <property type="entry name" value="SMALL RIBOSOMAL SUBUNIT PROTEIN US4M"/>
    <property type="match status" value="1"/>
</dbReference>
<dbReference type="Pfam" id="PF00163">
    <property type="entry name" value="Ribosomal_S4"/>
    <property type="match status" value="1"/>
</dbReference>
<dbReference type="Pfam" id="PF01479">
    <property type="entry name" value="S4"/>
    <property type="match status" value="1"/>
</dbReference>
<dbReference type="SMART" id="SM01390">
    <property type="entry name" value="Ribosomal_S4"/>
    <property type="match status" value="1"/>
</dbReference>
<dbReference type="SMART" id="SM00363">
    <property type="entry name" value="S4"/>
    <property type="match status" value="1"/>
</dbReference>
<dbReference type="SUPFAM" id="SSF55174">
    <property type="entry name" value="Alpha-L RNA-binding motif"/>
    <property type="match status" value="1"/>
</dbReference>
<dbReference type="PROSITE" id="PS00632">
    <property type="entry name" value="RIBOSOMAL_S4"/>
    <property type="match status" value="1"/>
</dbReference>
<dbReference type="PROSITE" id="PS50889">
    <property type="entry name" value="S4"/>
    <property type="match status" value="1"/>
</dbReference>
<comment type="function">
    <text evidence="1">One of the primary rRNA binding proteins, it binds directly to 16S rRNA where it nucleates assembly of the body of the 30S subunit.</text>
</comment>
<comment type="function">
    <text evidence="1">With S5 and S12 plays an important role in translational accuracy.</text>
</comment>
<comment type="subunit">
    <text evidence="1">Part of the 30S ribosomal subunit. Contacts protein S5. The interaction surface between S4 and S5 is involved in control of translational fidelity.</text>
</comment>
<comment type="similarity">
    <text evidence="1">Belongs to the universal ribosomal protein uS4 family.</text>
</comment>
<protein>
    <recommendedName>
        <fullName evidence="1">Small ribosomal subunit protein uS4</fullName>
    </recommendedName>
    <alternativeName>
        <fullName evidence="3">30S ribosomal protein S4</fullName>
    </alternativeName>
</protein>
<reference key="1">
    <citation type="journal article" date="2008" name="BMC Genomics">
        <title>Comparative genomic analysis of the gut bacterium Bifidobacterium longum reveals loci susceptible to deletion during pure culture growth.</title>
        <authorList>
            <person name="Lee J.H."/>
            <person name="Karamychev V.N."/>
            <person name="Kozyavkin S.A."/>
            <person name="Mills D."/>
            <person name="Pavlov A.R."/>
            <person name="Pavlova N.V."/>
            <person name="Polouchine N.N."/>
            <person name="Richardson P.M."/>
            <person name="Shakhova V.V."/>
            <person name="Slesarev A.I."/>
            <person name="Weimer B."/>
            <person name="O'Sullivan D.J."/>
        </authorList>
    </citation>
    <scope>NUCLEOTIDE SEQUENCE [LARGE SCALE GENOMIC DNA]</scope>
    <source>
        <strain>DJO10A</strain>
    </source>
</reference>
<sequence>MTNVQRSRRQVRLSRALGIALTPKAQRIFEKRPYAPGEHGRDRRRTESDYAVRMREKQRLRAQYGISEKQLRAAYEKATRTAGQTGNAMLTDLETRLDNLVLRAGFARTTAQARQFVVHRHILVDGNIVDRPSYRVKPGQTIQVKAKSQTMVPFQIAAEGVHRDVLPAVPGYLDVNLPSLKATVTRKPEVEEIPVQVNIQYVVEFYAR</sequence>
<feature type="chain" id="PRO_1000140689" description="Small ribosomal subunit protein uS4">
    <location>
        <begin position="1"/>
        <end position="208"/>
    </location>
</feature>
<feature type="domain" description="S4 RNA-binding" evidence="1">
    <location>
        <begin position="95"/>
        <end position="161"/>
    </location>
</feature>
<feature type="region of interest" description="Disordered" evidence="2">
    <location>
        <begin position="30"/>
        <end position="49"/>
    </location>
</feature>
<evidence type="ECO:0000255" key="1">
    <source>
        <dbReference type="HAMAP-Rule" id="MF_01306"/>
    </source>
</evidence>
<evidence type="ECO:0000256" key="2">
    <source>
        <dbReference type="SAM" id="MobiDB-lite"/>
    </source>
</evidence>
<evidence type="ECO:0000305" key="3"/>
<organism>
    <name type="scientific">Bifidobacterium longum (strain DJO10A)</name>
    <dbReference type="NCBI Taxonomy" id="205913"/>
    <lineage>
        <taxon>Bacteria</taxon>
        <taxon>Bacillati</taxon>
        <taxon>Actinomycetota</taxon>
        <taxon>Actinomycetes</taxon>
        <taxon>Bifidobacteriales</taxon>
        <taxon>Bifidobacteriaceae</taxon>
        <taxon>Bifidobacterium</taxon>
    </lineage>
</organism>